<comment type="function">
    <text evidence="2">Catalyzes the conversion of 5-aminovalerate to 5-oxopentanoate.</text>
</comment>
<comment type="catalytic activity">
    <reaction evidence="2">
        <text>5-aminopentanoate + 2-oxoglutarate = 5-oxopentanoate + L-glutamate</text>
        <dbReference type="Rhea" id="RHEA:10212"/>
        <dbReference type="ChEBI" id="CHEBI:16120"/>
        <dbReference type="ChEBI" id="CHEBI:16810"/>
        <dbReference type="ChEBI" id="CHEBI:29985"/>
        <dbReference type="ChEBI" id="CHEBI:356010"/>
        <dbReference type="EC" id="2.6.1.48"/>
    </reaction>
</comment>
<comment type="cofactor">
    <cofactor evidence="4">
        <name>pyridoxal 5'-phosphate</name>
        <dbReference type="ChEBI" id="CHEBI:597326"/>
    </cofactor>
</comment>
<comment type="similarity">
    <text evidence="3">Belongs to the class-III pyridoxal-phosphate-dependent aminotransferase family.</text>
</comment>
<reference key="1">
    <citation type="journal article" date="2000" name="Nature">
        <title>Complete genome sequence of Pseudomonas aeruginosa PAO1, an opportunistic pathogen.</title>
        <authorList>
            <person name="Stover C.K."/>
            <person name="Pham X.-Q.T."/>
            <person name="Erwin A.L."/>
            <person name="Mizoguchi S.D."/>
            <person name="Warrener P."/>
            <person name="Hickey M.J."/>
            <person name="Brinkman F.S.L."/>
            <person name="Hufnagle W.O."/>
            <person name="Kowalik D.J."/>
            <person name="Lagrou M."/>
            <person name="Garber R.L."/>
            <person name="Goltry L."/>
            <person name="Tolentino E."/>
            <person name="Westbrock-Wadman S."/>
            <person name="Yuan Y."/>
            <person name="Brody L.L."/>
            <person name="Coulter S.N."/>
            <person name="Folger K.R."/>
            <person name="Kas A."/>
            <person name="Larbig K."/>
            <person name="Lim R.M."/>
            <person name="Smith K.A."/>
            <person name="Spencer D.H."/>
            <person name="Wong G.K.-S."/>
            <person name="Wu Z."/>
            <person name="Paulsen I.T."/>
            <person name="Reizer J."/>
            <person name="Saier M.H. Jr."/>
            <person name="Hancock R.E.W."/>
            <person name="Lory S."/>
            <person name="Olson M.V."/>
        </authorList>
    </citation>
    <scope>NUCLEOTIDE SEQUENCE [LARGE SCALE GENOMIC DNA]</scope>
    <source>
        <strain>ATCC 15692 / DSM 22644 / CIP 104116 / JCM 14847 / LMG 12228 / 1C / PRS 101 / PAO1</strain>
    </source>
</reference>
<reference key="2">
    <citation type="journal article" date="2007" name="FEBS J.">
        <title>Prediction of missing enzyme genes in a bacterial metabolic network. Reconstruction of the lysine-degradation pathway of Pseudomonas aeruginosa.</title>
        <authorList>
            <person name="Yamanishi Y."/>
            <person name="Mihara H."/>
            <person name="Osaki M."/>
            <person name="Muramatsu H."/>
            <person name="Esaki N."/>
            <person name="Sato T."/>
            <person name="Hizukuri Y."/>
            <person name="Goto S."/>
            <person name="Kanehisa M."/>
        </authorList>
    </citation>
    <scope>FUNCTION</scope>
    <scope>CATALYTIC ACTIVITY</scope>
    <scope>COFACTOR</scope>
    <scope>PATHWAY</scope>
    <source>
        <strain>ATCC 15692 / DSM 22644 / CIP 104116 / JCM 14847 / LMG 12228 / 1C / PRS 101 / PAO1</strain>
    </source>
</reference>
<feature type="chain" id="PRO_0000418394" description="5-aminovalerate aminotransferase DavT">
    <location>
        <begin position="1"/>
        <end position="426"/>
    </location>
</feature>
<feature type="binding site" evidence="1">
    <location>
        <begin position="112"/>
        <end position="113"/>
    </location>
    <ligand>
        <name>pyridoxal 5'-phosphate</name>
        <dbReference type="ChEBI" id="CHEBI:597326"/>
    </ligand>
</feature>
<feature type="binding site" evidence="1">
    <location>
        <position position="139"/>
    </location>
    <ligand>
        <name>pyridoxal 5'-phosphate</name>
        <dbReference type="ChEBI" id="CHEBI:597326"/>
    </ligand>
</feature>
<feature type="binding site" evidence="1">
    <location>
        <begin position="240"/>
        <end position="243"/>
    </location>
    <ligand>
        <name>pyridoxal 5'-phosphate</name>
        <dbReference type="ChEBI" id="CHEBI:597326"/>
    </ligand>
</feature>
<feature type="binding site" evidence="1">
    <location>
        <position position="298"/>
    </location>
    <ligand>
        <name>pyridoxal 5'-phosphate</name>
        <dbReference type="ChEBI" id="CHEBI:597326"/>
    </ligand>
</feature>
<feature type="modified residue" description="N6-(pyridoxal phosphate)lysine" evidence="1">
    <location>
        <position position="269"/>
    </location>
</feature>
<accession>Q9I6M4</accession>
<keyword id="KW-0032">Aminotransferase</keyword>
<keyword id="KW-0663">Pyridoxal phosphate</keyword>
<keyword id="KW-1185">Reference proteome</keyword>
<keyword id="KW-0808">Transferase</keyword>
<gene>
    <name type="primary">davT</name>
    <name type="ordered locus">PA0266</name>
</gene>
<proteinExistence type="evidence at protein level"/>
<name>DAVT_PSEAE</name>
<organism>
    <name type="scientific">Pseudomonas aeruginosa (strain ATCC 15692 / DSM 22644 / CIP 104116 / JCM 14847 / LMG 12228 / 1C / PRS 101 / PAO1)</name>
    <dbReference type="NCBI Taxonomy" id="208964"/>
    <lineage>
        <taxon>Bacteria</taxon>
        <taxon>Pseudomonadati</taxon>
        <taxon>Pseudomonadota</taxon>
        <taxon>Gammaproteobacteria</taxon>
        <taxon>Pseudomonadales</taxon>
        <taxon>Pseudomonadaceae</taxon>
        <taxon>Pseudomonas</taxon>
    </lineage>
</organism>
<sequence>MSKTNESLLKRRQAAVPRGVGQIHPVVAERAENSTVWDVEGREYIDFAGGIAVLNTGHLHPKVIAAVQEQLGKLSHTCFQVLAYEPYIELAEEIAKRVPGDFPKKTLLVTSGSEAVENAVKIARAATGRAGVIAFTGAYHGRTMMTLGLTGKVVPYSAGMGLMPGGIFRALAPCELHGVSEDDSIASIERIFKNDAQPQDIAAIIIEPVQGEGGFYVNSKSFMQRLRALCDQHGILLIADEVQTGAGRTGTFFATEQLGIVPDLTTFAKSVGGGFPISGVAGKAEIMDAIAPGGLGGTYAGSPIACAAALAVLKVFEEEKLLERSQAVGERLKAGLREIQAKHKVIGDVRGLGSMVAIELFEGGDTHKPAAELVSKIVVRAREKGLILLSCGTYYNVIRFLMPVTIPDAQLEKGLAILAECFDELA</sequence>
<dbReference type="EC" id="2.6.1.48"/>
<dbReference type="EMBL" id="AE004091">
    <property type="protein sequence ID" value="AAG03655.1"/>
    <property type="molecule type" value="Genomic_DNA"/>
</dbReference>
<dbReference type="PIR" id="B83611">
    <property type="entry name" value="B83611"/>
</dbReference>
<dbReference type="RefSeq" id="NP_248957.1">
    <property type="nucleotide sequence ID" value="NC_002516.2"/>
</dbReference>
<dbReference type="SMR" id="Q9I6M4"/>
<dbReference type="FunCoup" id="Q9I6M4">
    <property type="interactions" value="489"/>
</dbReference>
<dbReference type="STRING" id="208964.PA0266"/>
<dbReference type="PaxDb" id="208964-PA0266"/>
<dbReference type="GeneID" id="880917"/>
<dbReference type="KEGG" id="pae:PA0266"/>
<dbReference type="PATRIC" id="fig|208964.12.peg.278"/>
<dbReference type="PseudoCAP" id="PA0266"/>
<dbReference type="HOGENOM" id="CLU_016922_10_0_6"/>
<dbReference type="InParanoid" id="Q9I6M4"/>
<dbReference type="OrthoDB" id="9801052at2"/>
<dbReference type="PhylomeDB" id="Q9I6M4"/>
<dbReference type="BioCyc" id="MetaCyc:MONOMER-15074"/>
<dbReference type="BioCyc" id="PAER208964:G1FZ6-268-MONOMER"/>
<dbReference type="BRENDA" id="2.6.1.48">
    <property type="organism ID" value="5087"/>
</dbReference>
<dbReference type="Proteomes" id="UP000002438">
    <property type="component" value="Chromosome"/>
</dbReference>
<dbReference type="GO" id="GO:0005829">
    <property type="term" value="C:cytosol"/>
    <property type="evidence" value="ECO:0000318"/>
    <property type="project" value="GO_Central"/>
</dbReference>
<dbReference type="GO" id="GO:0034386">
    <property type="term" value="F:4-aminobutyrate:2-oxoglutarate transaminase activity"/>
    <property type="evidence" value="ECO:0007669"/>
    <property type="project" value="InterPro"/>
</dbReference>
<dbReference type="GO" id="GO:0047589">
    <property type="term" value="F:5-aminovalerate transaminase activity"/>
    <property type="evidence" value="ECO:0000314"/>
    <property type="project" value="UniProtKB"/>
</dbReference>
<dbReference type="GO" id="GO:0030170">
    <property type="term" value="F:pyridoxal phosphate binding"/>
    <property type="evidence" value="ECO:0000318"/>
    <property type="project" value="GO_Central"/>
</dbReference>
<dbReference type="GO" id="GO:0009450">
    <property type="term" value="P:gamma-aminobutyric acid catabolic process"/>
    <property type="evidence" value="ECO:0000318"/>
    <property type="project" value="GO_Central"/>
</dbReference>
<dbReference type="GO" id="GO:0019477">
    <property type="term" value="P:L-lysine catabolic process"/>
    <property type="evidence" value="ECO:0000314"/>
    <property type="project" value="UniProtKB"/>
</dbReference>
<dbReference type="CDD" id="cd00610">
    <property type="entry name" value="OAT_like"/>
    <property type="match status" value="1"/>
</dbReference>
<dbReference type="FunFam" id="3.40.640.10:FF:000013">
    <property type="entry name" value="4-aminobutyrate aminotransferase"/>
    <property type="match status" value="1"/>
</dbReference>
<dbReference type="FunFam" id="3.90.1150.10:FF:000022">
    <property type="entry name" value="4-aminobutyrate aminotransferase"/>
    <property type="match status" value="1"/>
</dbReference>
<dbReference type="Gene3D" id="3.90.1150.10">
    <property type="entry name" value="Aspartate Aminotransferase, domain 1"/>
    <property type="match status" value="1"/>
</dbReference>
<dbReference type="Gene3D" id="3.40.640.10">
    <property type="entry name" value="Type I PLP-dependent aspartate aminotransferase-like (Major domain)"/>
    <property type="match status" value="1"/>
</dbReference>
<dbReference type="InterPro" id="IPR004632">
    <property type="entry name" value="4NH2But_aminotransferase_bac"/>
</dbReference>
<dbReference type="InterPro" id="IPR005814">
    <property type="entry name" value="Aminotrans_3"/>
</dbReference>
<dbReference type="InterPro" id="IPR049704">
    <property type="entry name" value="Aminotrans_3_PPA_site"/>
</dbReference>
<dbReference type="InterPro" id="IPR050103">
    <property type="entry name" value="Class-III_PLP-dep_AT"/>
</dbReference>
<dbReference type="InterPro" id="IPR015424">
    <property type="entry name" value="PyrdxlP-dep_Trfase"/>
</dbReference>
<dbReference type="InterPro" id="IPR015421">
    <property type="entry name" value="PyrdxlP-dep_Trfase_major"/>
</dbReference>
<dbReference type="InterPro" id="IPR015422">
    <property type="entry name" value="PyrdxlP-dep_Trfase_small"/>
</dbReference>
<dbReference type="NCBIfam" id="TIGR00700">
    <property type="entry name" value="GABAtrnsam"/>
    <property type="match status" value="1"/>
</dbReference>
<dbReference type="NCBIfam" id="NF005985">
    <property type="entry name" value="PRK08088.1"/>
    <property type="match status" value="1"/>
</dbReference>
<dbReference type="PANTHER" id="PTHR11986">
    <property type="entry name" value="AMINOTRANSFERASE CLASS III"/>
    <property type="match status" value="1"/>
</dbReference>
<dbReference type="PANTHER" id="PTHR11986:SF58">
    <property type="entry name" value="LEUCINE_METHIONINE RACEMASE"/>
    <property type="match status" value="1"/>
</dbReference>
<dbReference type="Pfam" id="PF00202">
    <property type="entry name" value="Aminotran_3"/>
    <property type="match status" value="1"/>
</dbReference>
<dbReference type="PIRSF" id="PIRSF000521">
    <property type="entry name" value="Transaminase_4ab_Lys_Orn"/>
    <property type="match status" value="1"/>
</dbReference>
<dbReference type="SUPFAM" id="SSF53383">
    <property type="entry name" value="PLP-dependent transferases"/>
    <property type="match status" value="1"/>
</dbReference>
<dbReference type="PROSITE" id="PS00600">
    <property type="entry name" value="AA_TRANSFER_CLASS_3"/>
    <property type="match status" value="1"/>
</dbReference>
<protein>
    <recommendedName>
        <fullName>5-aminovalerate aminotransferase DavT</fullName>
        <ecNumber>2.6.1.48</ecNumber>
    </recommendedName>
    <alternativeName>
        <fullName>5-aminovalerate transaminase</fullName>
    </alternativeName>
    <alternativeName>
        <fullName>Delta-aminovalerate aminotransferase</fullName>
    </alternativeName>
</protein>
<evidence type="ECO:0000250" key="1"/>
<evidence type="ECO:0000269" key="2">
    <source>
    </source>
</evidence>
<evidence type="ECO:0000305" key="3"/>
<evidence type="ECO:0000305" key="4">
    <source>
    </source>
</evidence>